<name>RL6_BURMS</name>
<accession>A1V888</accession>
<protein>
    <recommendedName>
        <fullName evidence="1">Large ribosomal subunit protein uL6</fullName>
    </recommendedName>
    <alternativeName>
        <fullName evidence="2">50S ribosomal protein L6</fullName>
    </alternativeName>
</protein>
<sequence length="176" mass="18676">MSRVGKSPIALQGAEVKLADGAITVKGPLGTITQAVNPLVNVANNDGTLNLSPVDDSREANALSGTMRAIIANAVHGVTKGFERKLTLVGVGYRAQAQGDKLNLSLGFSHPVVHQMPEGIKAETPTQTEIVIKGIDKQKVGQVAAEVRGYRPPEPYKGKGVRYADEVVILKETKKK</sequence>
<evidence type="ECO:0000255" key="1">
    <source>
        <dbReference type="HAMAP-Rule" id="MF_01365"/>
    </source>
</evidence>
<evidence type="ECO:0000305" key="2"/>
<organism>
    <name type="scientific">Burkholderia mallei (strain SAVP1)</name>
    <dbReference type="NCBI Taxonomy" id="320388"/>
    <lineage>
        <taxon>Bacteria</taxon>
        <taxon>Pseudomonadati</taxon>
        <taxon>Pseudomonadota</taxon>
        <taxon>Betaproteobacteria</taxon>
        <taxon>Burkholderiales</taxon>
        <taxon>Burkholderiaceae</taxon>
        <taxon>Burkholderia</taxon>
        <taxon>pseudomallei group</taxon>
    </lineage>
</organism>
<proteinExistence type="inferred from homology"/>
<dbReference type="EMBL" id="CP000526">
    <property type="protein sequence ID" value="ABM52880.1"/>
    <property type="molecule type" value="Genomic_DNA"/>
</dbReference>
<dbReference type="RefSeq" id="WP_004197947.1">
    <property type="nucleotide sequence ID" value="NC_008785.1"/>
</dbReference>
<dbReference type="SMR" id="A1V888"/>
<dbReference type="GeneID" id="93061817"/>
<dbReference type="KEGG" id="bmv:BMASAVP1_A3154"/>
<dbReference type="HOGENOM" id="CLU_065464_1_2_4"/>
<dbReference type="GO" id="GO:0022625">
    <property type="term" value="C:cytosolic large ribosomal subunit"/>
    <property type="evidence" value="ECO:0007669"/>
    <property type="project" value="TreeGrafter"/>
</dbReference>
<dbReference type="GO" id="GO:0019843">
    <property type="term" value="F:rRNA binding"/>
    <property type="evidence" value="ECO:0007669"/>
    <property type="project" value="UniProtKB-UniRule"/>
</dbReference>
<dbReference type="GO" id="GO:0003735">
    <property type="term" value="F:structural constituent of ribosome"/>
    <property type="evidence" value="ECO:0007669"/>
    <property type="project" value="InterPro"/>
</dbReference>
<dbReference type="GO" id="GO:0002181">
    <property type="term" value="P:cytoplasmic translation"/>
    <property type="evidence" value="ECO:0007669"/>
    <property type="project" value="TreeGrafter"/>
</dbReference>
<dbReference type="FunFam" id="3.90.930.12:FF:000001">
    <property type="entry name" value="50S ribosomal protein L6"/>
    <property type="match status" value="1"/>
</dbReference>
<dbReference type="Gene3D" id="3.90.930.12">
    <property type="entry name" value="Ribosomal protein L6, alpha-beta domain"/>
    <property type="match status" value="2"/>
</dbReference>
<dbReference type="HAMAP" id="MF_01365_B">
    <property type="entry name" value="Ribosomal_uL6_B"/>
    <property type="match status" value="1"/>
</dbReference>
<dbReference type="InterPro" id="IPR000702">
    <property type="entry name" value="Ribosomal_uL6-like"/>
</dbReference>
<dbReference type="InterPro" id="IPR036789">
    <property type="entry name" value="Ribosomal_uL6-like_a/b-dom_sf"/>
</dbReference>
<dbReference type="InterPro" id="IPR020040">
    <property type="entry name" value="Ribosomal_uL6_a/b-dom"/>
</dbReference>
<dbReference type="InterPro" id="IPR019906">
    <property type="entry name" value="Ribosomal_uL6_bac-type"/>
</dbReference>
<dbReference type="InterPro" id="IPR002358">
    <property type="entry name" value="Ribosomal_uL6_CS"/>
</dbReference>
<dbReference type="NCBIfam" id="TIGR03654">
    <property type="entry name" value="L6_bact"/>
    <property type="match status" value="1"/>
</dbReference>
<dbReference type="PANTHER" id="PTHR11655">
    <property type="entry name" value="60S/50S RIBOSOMAL PROTEIN L6/L9"/>
    <property type="match status" value="1"/>
</dbReference>
<dbReference type="PANTHER" id="PTHR11655:SF14">
    <property type="entry name" value="LARGE RIBOSOMAL SUBUNIT PROTEIN UL6M"/>
    <property type="match status" value="1"/>
</dbReference>
<dbReference type="Pfam" id="PF00347">
    <property type="entry name" value="Ribosomal_L6"/>
    <property type="match status" value="2"/>
</dbReference>
<dbReference type="PIRSF" id="PIRSF002162">
    <property type="entry name" value="Ribosomal_L6"/>
    <property type="match status" value="1"/>
</dbReference>
<dbReference type="PRINTS" id="PR00059">
    <property type="entry name" value="RIBOSOMALL6"/>
</dbReference>
<dbReference type="SUPFAM" id="SSF56053">
    <property type="entry name" value="Ribosomal protein L6"/>
    <property type="match status" value="2"/>
</dbReference>
<dbReference type="PROSITE" id="PS00525">
    <property type="entry name" value="RIBOSOMAL_L6_1"/>
    <property type="match status" value="1"/>
</dbReference>
<comment type="function">
    <text evidence="1">This protein binds to the 23S rRNA, and is important in its secondary structure. It is located near the subunit interface in the base of the L7/L12 stalk, and near the tRNA binding site of the peptidyltransferase center.</text>
</comment>
<comment type="subunit">
    <text evidence="1">Part of the 50S ribosomal subunit.</text>
</comment>
<comment type="similarity">
    <text evidence="1">Belongs to the universal ribosomal protein uL6 family.</text>
</comment>
<gene>
    <name evidence="1" type="primary">rplF</name>
    <name type="ordered locus">BMASAVP1_A3154</name>
</gene>
<keyword id="KW-0687">Ribonucleoprotein</keyword>
<keyword id="KW-0689">Ribosomal protein</keyword>
<keyword id="KW-0694">RNA-binding</keyword>
<keyword id="KW-0699">rRNA-binding</keyword>
<feature type="chain" id="PRO_1000055206" description="Large ribosomal subunit protein uL6">
    <location>
        <begin position="1"/>
        <end position="176"/>
    </location>
</feature>
<reference key="1">
    <citation type="journal article" date="2010" name="Genome Biol. Evol.">
        <title>Continuing evolution of Burkholderia mallei through genome reduction and large-scale rearrangements.</title>
        <authorList>
            <person name="Losada L."/>
            <person name="Ronning C.M."/>
            <person name="DeShazer D."/>
            <person name="Woods D."/>
            <person name="Fedorova N."/>
            <person name="Kim H.S."/>
            <person name="Shabalina S.A."/>
            <person name="Pearson T.R."/>
            <person name="Brinkac L."/>
            <person name="Tan P."/>
            <person name="Nandi T."/>
            <person name="Crabtree J."/>
            <person name="Badger J."/>
            <person name="Beckstrom-Sternberg S."/>
            <person name="Saqib M."/>
            <person name="Schutzer S.E."/>
            <person name="Keim P."/>
            <person name="Nierman W.C."/>
        </authorList>
    </citation>
    <scope>NUCLEOTIDE SEQUENCE [LARGE SCALE GENOMIC DNA]</scope>
    <source>
        <strain>SAVP1</strain>
    </source>
</reference>